<protein>
    <recommendedName>
        <fullName evidence="11">Serine protease Hip1</fullName>
        <ecNumber evidence="7 9">3.4.21.-</ecNumber>
    </recommendedName>
    <alternativeName>
        <fullName evidence="10">Hydrolase important for pathogenesis 1</fullName>
    </alternativeName>
    <alternativeName>
        <fullName evidence="10">Serine hydrolase Hip1</fullName>
    </alternativeName>
</protein>
<keyword id="KW-0002">3D-structure</keyword>
<keyword id="KW-1003">Cell membrane</keyword>
<keyword id="KW-1015">Disulfide bond</keyword>
<keyword id="KW-0378">Hydrolase</keyword>
<keyword id="KW-0449">Lipoprotein</keyword>
<keyword id="KW-0472">Membrane</keyword>
<keyword id="KW-0564">Palmitate</keyword>
<keyword id="KW-1185">Reference proteome</keyword>
<keyword id="KW-0732">Signal</keyword>
<keyword id="KW-0843">Virulence</keyword>
<feature type="signal peptide" evidence="2">
    <location>
        <begin position="1"/>
        <end position="30"/>
    </location>
</feature>
<feature type="chain" id="PRO_0000027329" description="Serine protease Hip1">
    <location>
        <begin position="31"/>
        <end position="520"/>
    </location>
</feature>
<feature type="domain" description="AB hydrolase-1" evidence="1">
    <location>
        <begin position="102"/>
        <end position="497"/>
    </location>
</feature>
<feature type="active site" description="Nucleophile" evidence="14">
    <location>
        <position position="228"/>
    </location>
</feature>
<feature type="active site" evidence="14">
    <location>
        <position position="463"/>
    </location>
</feature>
<feature type="active site" description="Proton donor" evidence="14">
    <location>
        <position position="490"/>
    </location>
</feature>
<feature type="lipid moiety-binding region" description="N-palmitoyl cysteine" evidence="2">
    <location>
        <position position="31"/>
    </location>
</feature>
<feature type="lipid moiety-binding region" description="S-diacylglycerol cysteine" evidence="2">
    <location>
        <position position="31"/>
    </location>
</feature>
<feature type="disulfide bond" evidence="9 15 16 17">
    <location>
        <begin position="55"/>
        <end position="70"/>
    </location>
</feature>
<feature type="disulfide bond" evidence="9 15 16 17">
    <location>
        <begin position="153"/>
        <end position="189"/>
    </location>
</feature>
<feature type="disulfide bond" evidence="9 15 16 17">
    <location>
        <begin position="282"/>
        <end position="288"/>
    </location>
</feature>
<feature type="disulfide bond" evidence="9 15 16 17">
    <location>
        <begin position="393"/>
        <end position="433"/>
    </location>
</feature>
<feature type="disulfide bond" evidence="9 15 16 17">
    <location>
        <begin position="499"/>
        <end position="520"/>
    </location>
</feature>
<feature type="mutagenesis site" description="Cannot cleave GroEL2." evidence="3">
    <original>C</original>
    <variation>A</variation>
    <location>
        <position position="31"/>
    </location>
</feature>
<feature type="mutagenesis site" description="Cannot complement the growth defect of the disruption mutant. Cannot cleave GroEL2. Is unable to hydrolyze azocasein." evidence="3 7 9">
    <original>S</original>
    <variation>A</variation>
    <location>
        <position position="228"/>
    </location>
</feature>
<feature type="mutagenesis site" description="Small decrease in activity with azocasein as substrate. Almost abolishes cleavage of GroEL2." evidence="9">
    <original>T</original>
    <variation>A</variation>
    <location>
        <position position="466"/>
    </location>
</feature>
<feature type="strand" evidence="20">
    <location>
        <begin position="69"/>
        <end position="78"/>
    </location>
</feature>
<feature type="strand" evidence="18">
    <location>
        <begin position="81"/>
        <end position="84"/>
    </location>
</feature>
<feature type="strand" evidence="20">
    <location>
        <begin position="86"/>
        <end position="94"/>
    </location>
</feature>
<feature type="strand" evidence="20">
    <location>
        <begin position="97"/>
        <end position="99"/>
    </location>
</feature>
<feature type="strand" evidence="20">
    <location>
        <begin position="102"/>
        <end position="107"/>
    </location>
</feature>
<feature type="turn" evidence="20">
    <location>
        <begin position="110"/>
        <end position="112"/>
    </location>
</feature>
<feature type="helix" evidence="20">
    <location>
        <begin position="115"/>
        <end position="125"/>
    </location>
</feature>
<feature type="helix" evidence="20">
    <location>
        <begin position="128"/>
        <end position="133"/>
    </location>
</feature>
<feature type="strand" evidence="20">
    <location>
        <begin position="134"/>
        <end position="139"/>
    </location>
</feature>
<feature type="strand" evidence="20">
    <location>
        <begin position="147"/>
        <end position="149"/>
    </location>
</feature>
<feature type="helix" evidence="20">
    <location>
        <begin position="156"/>
        <end position="163"/>
    </location>
</feature>
<feature type="helix" evidence="20">
    <location>
        <begin position="172"/>
        <end position="193"/>
    </location>
</feature>
<feature type="helix" evidence="20">
    <location>
        <begin position="195"/>
        <end position="199"/>
    </location>
</feature>
<feature type="helix" evidence="20">
    <location>
        <begin position="203"/>
        <end position="216"/>
    </location>
</feature>
<feature type="strand" evidence="20">
    <location>
        <begin position="220"/>
        <end position="227"/>
    </location>
</feature>
<feature type="helix" evidence="20">
    <location>
        <begin position="230"/>
        <end position="240"/>
    </location>
</feature>
<feature type="helix" evidence="20">
    <location>
        <begin position="242"/>
        <end position="244"/>
    </location>
</feature>
<feature type="strand" evidence="20">
    <location>
        <begin position="245"/>
        <end position="252"/>
    </location>
</feature>
<feature type="helix" evidence="20">
    <location>
        <begin position="260"/>
        <end position="283"/>
    </location>
</feature>
<feature type="helix" evidence="20">
    <location>
        <begin position="294"/>
        <end position="296"/>
    </location>
</feature>
<feature type="helix" evidence="20">
    <location>
        <begin position="297"/>
        <end position="305"/>
    </location>
</feature>
<feature type="helix" evidence="20">
    <location>
        <begin position="306"/>
        <end position="308"/>
    </location>
</feature>
<feature type="strand" evidence="18">
    <location>
        <begin position="323"/>
        <end position="326"/>
    </location>
</feature>
<feature type="helix" evidence="20">
    <location>
        <begin position="330"/>
        <end position="340"/>
    </location>
</feature>
<feature type="helix" evidence="20">
    <location>
        <begin position="344"/>
        <end position="346"/>
    </location>
</feature>
<feature type="helix" evidence="20">
    <location>
        <begin position="347"/>
        <end position="358"/>
    </location>
</feature>
<feature type="helix" evidence="20">
    <location>
        <begin position="363"/>
        <end position="373"/>
    </location>
</feature>
<feature type="helix" evidence="20">
    <location>
        <begin position="384"/>
        <end position="394"/>
    </location>
</feature>
<feature type="helix" evidence="20">
    <location>
        <begin position="402"/>
        <end position="415"/>
    </location>
</feature>
<feature type="helix" evidence="20">
    <location>
        <begin position="417"/>
        <end position="419"/>
    </location>
</feature>
<feature type="helix" evidence="20">
    <location>
        <begin position="432"/>
        <end position="435"/>
    </location>
</feature>
<feature type="strand" evidence="20">
    <location>
        <begin position="456"/>
        <end position="460"/>
    </location>
</feature>
<feature type="strand" evidence="20">
    <location>
        <begin position="464"/>
        <end position="466"/>
    </location>
</feature>
<feature type="helix" evidence="20">
    <location>
        <begin position="468"/>
        <end position="478"/>
    </location>
</feature>
<feature type="strand" evidence="20">
    <location>
        <begin position="481"/>
        <end position="485"/>
    </location>
</feature>
<feature type="strand" evidence="20">
    <location>
        <begin position="487"/>
        <end position="490"/>
    </location>
</feature>
<feature type="turn" evidence="19">
    <location>
        <begin position="493"/>
        <end position="496"/>
    </location>
</feature>
<feature type="helix" evidence="20">
    <location>
        <begin position="498"/>
        <end position="510"/>
    </location>
</feature>
<organism>
    <name type="scientific">Mycobacterium tuberculosis (strain ATCC 25618 / H37Rv)</name>
    <dbReference type="NCBI Taxonomy" id="83332"/>
    <lineage>
        <taxon>Bacteria</taxon>
        <taxon>Bacillati</taxon>
        <taxon>Actinomycetota</taxon>
        <taxon>Actinomycetes</taxon>
        <taxon>Mycobacteriales</taxon>
        <taxon>Mycobacteriaceae</taxon>
        <taxon>Mycobacterium</taxon>
        <taxon>Mycobacterium tuberculosis complex</taxon>
    </lineage>
</organism>
<gene>
    <name evidence="10" type="primary">hip1</name>
    <name evidence="12" type="synonym">caeA</name>
    <name type="ordered locus">Rv2224c</name>
    <name type="ORF">MTCY427.05c</name>
</gene>
<proteinExistence type="evidence at protein level"/>
<name>HIP1_MYCTU</name>
<sequence>MGMRLSRRDKIARMLLIWAALAAVALVLVGCIRVVGGRARMAEPKLGQPVEWTPCRSSNPQVKIPGGALCGKLAVPVDYDRPDGDVAALALIRFPATGDKIGSLVINPGGPGESGIEAALGVFQTLPKRVHERFDLVGFDPRGVASSRPAIWCNSDADNDRLRAEPQVDYSREGVAHIENETKQFVGRCVDKMGKNFLAHVGTVNVAKDLDAIRAALGDDKLTYLGYSYGTRIGSAYAEEFPQRVRAMILDGAVDPNADPIEAELRQAKGFQDAFNNYAADCAKNAGCPLGADPAKAVEVYHSLVDPLVDPDNPRISRPARTKDPRGLSYSDAIVGTIMALYSPNLWQHLTDGLSELVDNRGDTLLALADMYMRRDSHGRYNNSGDARVAINCVDQPPVTDRDKVIDEDRRAREIAPFMSYGKFTGDAPLGTCAFWPVPPTSQPHAVSAPGLVPTVVVSTTHDPATPYKAGVDLANQLRGSLLTFDGTQHTVVFQGDSCIDEYVTAYLIGGTTPPSGAKC</sequence>
<evidence type="ECO:0000255" key="1"/>
<evidence type="ECO:0000255" key="2">
    <source>
        <dbReference type="PROSITE-ProRule" id="PRU00303"/>
    </source>
</evidence>
<evidence type="ECO:0000269" key="3">
    <source>
    </source>
</evidence>
<evidence type="ECO:0000269" key="4">
    <source>
    </source>
</evidence>
<evidence type="ECO:0000269" key="5">
    <source>
    </source>
</evidence>
<evidence type="ECO:0000269" key="6">
    <source>
    </source>
</evidence>
<evidence type="ECO:0000269" key="7">
    <source>
    </source>
</evidence>
<evidence type="ECO:0000269" key="8">
    <source>
    </source>
</evidence>
<evidence type="ECO:0000269" key="9">
    <source>
    </source>
</evidence>
<evidence type="ECO:0000303" key="10">
    <source>
    </source>
</evidence>
<evidence type="ECO:0000303" key="11">
    <source>
    </source>
</evidence>
<evidence type="ECO:0000303" key="12">
    <source>
    </source>
</evidence>
<evidence type="ECO:0000305" key="13"/>
<evidence type="ECO:0000305" key="14">
    <source>
    </source>
</evidence>
<evidence type="ECO:0007744" key="15">
    <source>
        <dbReference type="PDB" id="5UGQ"/>
    </source>
</evidence>
<evidence type="ECO:0007744" key="16">
    <source>
        <dbReference type="PDB" id="5UNO"/>
    </source>
</evidence>
<evidence type="ECO:0007744" key="17">
    <source>
        <dbReference type="PDB" id="5UOH"/>
    </source>
</evidence>
<evidence type="ECO:0007829" key="18">
    <source>
        <dbReference type="PDB" id="5UGQ"/>
    </source>
</evidence>
<evidence type="ECO:0007829" key="19">
    <source>
        <dbReference type="PDB" id="5UOH"/>
    </source>
</evidence>
<evidence type="ECO:0007829" key="20">
    <source>
        <dbReference type="PDB" id="7SFM"/>
    </source>
</evidence>
<comment type="function">
    <text evidence="3 7 9">Serine protease that promotes tuberculosis (TB) pathogenesis by promoting the processing and the extracellular release of the M.tuberculosis (Mtb) heat-shock protein GroEL2 (PubMed:18172199, PubMed:24830429, PubMed:28346784). Hip1-dependent cleavage of multimeric GroEL2 results in release of cleaved monomeric GroEL2 into the extracellular milieu. Conversion of multimeric GroEL2 into monomeric GroEL2 is likely to be a mechanism for regulating GroEL2 functions during Mtb pathogenesis (PubMed:24830429). In vitro, exhibits proteolytic activity against synthetic peptides and the general protease substrate azocasein, and exhibits esterase activity against the ester substrate p-nitrophenylbutyrate (PubMed:24830429, PubMed:28346784).</text>
</comment>
<comment type="function">
    <text evidence="3 5 6">Key immunomodulatory virulence factor, which promotes survival in host macrophages and modulates host immune responses (PubMed:18172199, PubMed:21947769, PubMed:24659689). Impacts host innate immune responses by preventing robust macrophage activation (PubMed:18172199, PubMed:21947769). Dampens macrophage pro-inflammatory responses by limiting toll-like receptor 2 (TLR2) activation. It also dampens TLR2-independent activation of the inflammasome and limits secretion of interleukin-18 (IL-18). May act by masking cell surface interactions between TLR2 agonists on Mtb and TLR2 on macrophages (PubMed:21947769). In addition, impacts host adaptive immune responses. It prevents robust maturation of infected dendritic cells (DCs), limits the secretion of key pro-inflammatory cytokines such as IL-12, impairs Ag presentation, and modulates the nature of Ag-specific T-cell responses (PubMed:24659689).</text>
</comment>
<comment type="activity regulation">
    <text evidence="7">Protease activity is inhibited by serine protease inhibitors but not by cysteine protease inhibitors.</text>
</comment>
<comment type="biophysicochemical properties">
    <kinetics>
        <KM evidence="9">0.19 mM for GroEL2</KM>
        <text evidence="9">kcat is 0.45 min(-1) with GroEL2 as substrate.</text>
    </kinetics>
</comment>
<comment type="subunit">
    <text evidence="7">Interacts with GroEL2.</text>
</comment>
<comment type="subcellular location">
    <subcellularLocation>
        <location evidence="3">Cell envelope</location>
    </subcellularLocation>
    <subcellularLocation>
        <location evidence="2 3">Cell membrane</location>
        <topology evidence="2">Lipid-anchor</topology>
    </subcellularLocation>
</comment>
<comment type="developmental stage">
    <text evidence="8">Shows esterase activity in active, dormant, and reactivating Mtb cultures.</text>
</comment>
<comment type="domain">
    <text evidence="9">The active site region is accessed through a large opening that suggests that the enzyme has endopeptidase activity rather than exopeptidase activity.</text>
</comment>
<comment type="disruption phenotype">
    <text evidence="3 4 5 6 7">Disruption of the gene leads to growth defects and attenuates the virulence of Mtb (PubMed:18172199, PubMed:19011036). Disruption of the gene enhances host innate immune responses, compromises the intracellular survival of Mtb in macrophages, and increases its susceptibility to lysozyme. It prolongs survival and reduces lung immunopathology of infected mice (PubMed:18172199). Disruption leads to earlier and significantly higher levels of key pro-inflammatory cytokines and chemokines (PubMed:21947769). Mutant induces enhanced levels of the key Th1-inducing cytokine IL-12, as well as other pro-inflammatory cytokines (IL-23, IL-6, TNF-alpha, IL-1beta, and IL-18) in DCs via MyD88- and TLR2/9-dependent pathways (PubMed:24659689). Infection with the hip1 mutant also induces higher levels of MHC class II and costimulatory molecules CD40 and CD86 (PubMed:24659689). At low pH, mutants are hypersensitive to antibiotics, sodium dodecyl sulfate, heat shock, and reactive oxygen and nitrogen intermediates (PubMed:19011036). GroEL2 remains uncleaved in the hip1 mutant (PubMed:24830429).</text>
</comment>
<comment type="miscellaneous">
    <text evidence="7">Hip1 is an attractive target for developing immunomodulatory therapeutics against Mtb.</text>
</comment>
<comment type="similarity">
    <text evidence="13">Belongs to the peptidase S33 family.</text>
</comment>
<accession>P9WHR3</accession>
<accession>L0TBN5</accession>
<accession>P65823</accession>
<accession>Q10509</accession>
<reference key="1">
    <citation type="journal article" date="1998" name="Nature">
        <title>Deciphering the biology of Mycobacterium tuberculosis from the complete genome sequence.</title>
        <authorList>
            <person name="Cole S.T."/>
            <person name="Brosch R."/>
            <person name="Parkhill J."/>
            <person name="Garnier T."/>
            <person name="Churcher C.M."/>
            <person name="Harris D.E."/>
            <person name="Gordon S.V."/>
            <person name="Eiglmeier K."/>
            <person name="Gas S."/>
            <person name="Barry C.E. III"/>
            <person name="Tekaia F."/>
            <person name="Badcock K."/>
            <person name="Basham D."/>
            <person name="Brown D."/>
            <person name="Chillingworth T."/>
            <person name="Connor R."/>
            <person name="Davies R.M."/>
            <person name="Devlin K."/>
            <person name="Feltwell T."/>
            <person name="Gentles S."/>
            <person name="Hamlin N."/>
            <person name="Holroyd S."/>
            <person name="Hornsby T."/>
            <person name="Jagels K."/>
            <person name="Krogh A."/>
            <person name="McLean J."/>
            <person name="Moule S."/>
            <person name="Murphy L.D."/>
            <person name="Oliver S."/>
            <person name="Osborne J."/>
            <person name="Quail M.A."/>
            <person name="Rajandream M.A."/>
            <person name="Rogers J."/>
            <person name="Rutter S."/>
            <person name="Seeger K."/>
            <person name="Skelton S."/>
            <person name="Squares S."/>
            <person name="Squares R."/>
            <person name="Sulston J.E."/>
            <person name="Taylor K."/>
            <person name="Whitehead S."/>
            <person name="Barrell B.G."/>
        </authorList>
    </citation>
    <scope>NUCLEOTIDE SEQUENCE [LARGE SCALE GENOMIC DNA]</scope>
    <source>
        <strain>ATCC 25618 / H37Rv</strain>
    </source>
</reference>
<reference key="2">
    <citation type="journal article" date="2008" name="Proc. Natl. Acad. Sci. U.S.A.">
        <title>Mycobacterium tuberculosis Rv2224c modulates innate immune responses.</title>
        <authorList>
            <person name="Rengarajan J."/>
            <person name="Murphy E."/>
            <person name="Park A."/>
            <person name="Krone C.L."/>
            <person name="Hett E.C."/>
            <person name="Bloom B.R."/>
            <person name="Glimcher L.H."/>
            <person name="Rubin E.J."/>
        </authorList>
    </citation>
    <scope>FUNCTION</scope>
    <scope>SUBCELLULAR LOCATION</scope>
    <scope>DISRUPTION PHENOTYPE</scope>
    <scope>MUTAGENESIS OF CYS-31 AND SER-228</scope>
</reference>
<reference key="3">
    <citation type="journal article" date="2009" name="J. Bacteriol.">
        <title>Acid-susceptible mutants of Mycobacterium tuberculosis share hypersusceptibility to cell wall and oxidative stress and to the host environment.</title>
        <authorList>
            <person name="Vandal O.H."/>
            <person name="Roberts J.A."/>
            <person name="Odaira T."/>
            <person name="Schnappinger D."/>
            <person name="Nathan C.F."/>
            <person name="Ehrt S."/>
        </authorList>
    </citation>
    <scope>DISRUPTION PHENOTYPE</scope>
</reference>
<reference key="4">
    <citation type="journal article" date="2011" name="Infect. Immun.">
        <title>Mycobacterium tuberculosis Hip1 dampens macrophage proinflammatory responses by limiting toll-like receptor 2 activation.</title>
        <authorList>
            <person name="Madan-Lala R."/>
            <person name="Peixoto K.V."/>
            <person name="Re F."/>
            <person name="Rengarajan J."/>
        </authorList>
    </citation>
    <scope>FUNCTION</scope>
    <scope>DISRUPTION PHENOTYPE</scope>
    <source>
        <strain>H37Rv</strain>
    </source>
</reference>
<reference key="5">
    <citation type="journal article" date="2011" name="Mol. Cell. Proteomics">
        <title>Proteogenomic analysis of Mycobacterium tuberculosis by high resolution mass spectrometry.</title>
        <authorList>
            <person name="Kelkar D.S."/>
            <person name="Kumar D."/>
            <person name="Kumar P."/>
            <person name="Balakrishnan L."/>
            <person name="Muthusamy B."/>
            <person name="Yadav A.K."/>
            <person name="Shrivastava P."/>
            <person name="Marimuthu A."/>
            <person name="Anand S."/>
            <person name="Sundaram H."/>
            <person name="Kingsbury R."/>
            <person name="Harsha H.C."/>
            <person name="Nair B."/>
            <person name="Prasad T.S."/>
            <person name="Chauhan D.S."/>
            <person name="Katoch K."/>
            <person name="Katoch V.M."/>
            <person name="Kumar P."/>
            <person name="Chaerkady R."/>
            <person name="Ramachandran S."/>
            <person name="Dash D."/>
            <person name="Pandey A."/>
        </authorList>
    </citation>
    <scope>IDENTIFICATION BY MASS SPECTROMETRY [LARGE SCALE ANALYSIS]</scope>
    <source>
        <strain>ATCC 25618 / H37Rv</strain>
    </source>
</reference>
<reference key="6">
    <citation type="journal article" date="2014" name="J. Immunol.">
        <title>Mycobacterium tuberculosis impairs dendritic cell functions through the serine hydrolase Hip1.</title>
        <authorList>
            <person name="Madan-Lala R."/>
            <person name="Sia J.K."/>
            <person name="King R."/>
            <person name="Adekambi T."/>
            <person name="Monin L."/>
            <person name="Khader S.A."/>
            <person name="Pulendran B."/>
            <person name="Rengarajan J."/>
        </authorList>
    </citation>
    <scope>FUNCTION</scope>
    <scope>DISRUPTION PHENOTYPE</scope>
    <source>
        <strain>H37Rv</strain>
    </source>
</reference>
<reference key="7">
    <citation type="journal article" date="2014" name="PLoS Pathog.">
        <title>Mycobacterium tuberculosis Hip1 modulates macrophage responses through proteolysis of GroEL2.</title>
        <authorList>
            <person name="Naffin-Olivos J.L."/>
            <person name="Georgieva M."/>
            <person name="Goldfarb N."/>
            <person name="Madan-Lala R."/>
            <person name="Dong L."/>
            <person name="Bizzell E."/>
            <person name="Valinetz E."/>
            <person name="Brandt G.S."/>
            <person name="Yu S."/>
            <person name="Shabashvili D.E."/>
            <person name="Ringe D."/>
            <person name="Dunn B.M."/>
            <person name="Petsko G.A."/>
            <person name="Rengarajan J."/>
        </authorList>
    </citation>
    <scope>FUNCTION</scope>
    <scope>CATALYTIC ACTIVITY</scope>
    <scope>ACTIVITY REGULATION</scope>
    <scope>INTERACTION WITH GROEL2</scope>
    <scope>DISRUPTION PHENOTYPE</scope>
    <scope>MUTAGENESIS OF SER-228</scope>
</reference>
<reference key="8">
    <citation type="journal article" date="2016" name="ACS Infect. Dis.">
        <title>Small-molecule probes reveal esterases with persistent activity in dormant and reactivating Mycobacterium tuberculosis.</title>
        <authorList>
            <person name="Tallman K.R."/>
            <person name="Levine S.R."/>
            <person name="Beatty K.E."/>
        </authorList>
    </citation>
    <scope>DEVELOPMENTAL STAGE</scope>
</reference>
<reference evidence="15 16 17" key="9">
    <citation type="journal article" date="2017" name="Biochemistry">
        <title>Structure Determination of Mycobacterium tuberculosis Serine Protease Hip1 (Rv2224c).</title>
        <authorList>
            <person name="Naffin-Olivos J.L."/>
            <person name="Daab A."/>
            <person name="White A."/>
            <person name="Goldfarb N.E."/>
            <person name="Milne A.C."/>
            <person name="Liu D."/>
            <person name="Baikovitz J."/>
            <person name="Dunn B.M."/>
            <person name="Rengarajan J."/>
            <person name="Petsko G.A."/>
            <person name="Ringe D."/>
        </authorList>
    </citation>
    <scope>X-RAY CRYSTALLOGRAPHY (2.60 ANGSTROMS) OF 50-520 OF WILD-TYPE AND MUTANT ALA-466</scope>
    <scope>FUNCTION</scope>
    <scope>CATALYTIC ACTIVITY</scope>
    <scope>BIOPHYSICOCHEMICAL PROPERTIES</scope>
    <scope>DOMAIN</scope>
    <scope>DISULFIDE BOND</scope>
    <scope>ACTIVE SITE</scope>
    <scope>MUTAGENESIS OF SER-228 AND THR-466</scope>
</reference>
<dbReference type="EC" id="3.4.21.-" evidence="7 9"/>
<dbReference type="EMBL" id="AL123456">
    <property type="protein sequence ID" value="CCP45002.1"/>
    <property type="molecule type" value="Genomic_DNA"/>
</dbReference>
<dbReference type="PIR" id="D70776">
    <property type="entry name" value="D70776"/>
</dbReference>
<dbReference type="RefSeq" id="NP_216740.1">
    <property type="nucleotide sequence ID" value="NC_000962.3"/>
</dbReference>
<dbReference type="RefSeq" id="WP_003411486.1">
    <property type="nucleotide sequence ID" value="NZ_NVQJ01000008.1"/>
</dbReference>
<dbReference type="PDB" id="5UGQ">
    <property type="method" value="X-ray"/>
    <property type="resolution" value="2.61 A"/>
    <property type="chains" value="A=50-520"/>
</dbReference>
<dbReference type="PDB" id="5UNO">
    <property type="method" value="X-ray"/>
    <property type="resolution" value="2.60 A"/>
    <property type="chains" value="A=50-520"/>
</dbReference>
<dbReference type="PDB" id="5UOH">
    <property type="method" value="X-ray"/>
    <property type="resolution" value="2.61 A"/>
    <property type="chains" value="A=50-520"/>
</dbReference>
<dbReference type="PDB" id="7SFM">
    <property type="method" value="X-ray"/>
    <property type="resolution" value="2.15 A"/>
    <property type="chains" value="A=48-520"/>
</dbReference>
<dbReference type="PDB" id="8E5W">
    <property type="method" value="X-ray"/>
    <property type="resolution" value="2.15 A"/>
    <property type="chains" value="A=43-520"/>
</dbReference>
<dbReference type="PDBsum" id="5UGQ"/>
<dbReference type="PDBsum" id="5UNO"/>
<dbReference type="PDBsum" id="5UOH"/>
<dbReference type="PDBsum" id="7SFM"/>
<dbReference type="PDBsum" id="8E5W"/>
<dbReference type="SMR" id="P9WHR3"/>
<dbReference type="STRING" id="83332.Rv2224c"/>
<dbReference type="ESTHER" id="myctu-ym24">
    <property type="family name" value="Tiancimycin-TnmK-Tripeptidase-HIP"/>
</dbReference>
<dbReference type="MEROPS" id="S33.023"/>
<dbReference type="PaxDb" id="83332-Rv2224c"/>
<dbReference type="GeneID" id="45426201"/>
<dbReference type="GeneID" id="887857"/>
<dbReference type="KEGG" id="mtu:Rv2224c"/>
<dbReference type="KEGG" id="mtv:RVBD_2224c"/>
<dbReference type="PATRIC" id="fig|83332.111.peg.2473"/>
<dbReference type="TubercuList" id="Rv2224c"/>
<dbReference type="eggNOG" id="COG0596">
    <property type="taxonomic scope" value="Bacteria"/>
</dbReference>
<dbReference type="InParanoid" id="P9WHR3"/>
<dbReference type="OrthoDB" id="3252468at2"/>
<dbReference type="PhylomeDB" id="P9WHR3"/>
<dbReference type="SABIO-RK" id="P9WHR3"/>
<dbReference type="Proteomes" id="UP000001584">
    <property type="component" value="Chromosome"/>
</dbReference>
<dbReference type="GO" id="GO:0030313">
    <property type="term" value="C:cell envelope"/>
    <property type="evidence" value="ECO:0007669"/>
    <property type="project" value="UniProtKB-SubCell"/>
</dbReference>
<dbReference type="GO" id="GO:0005829">
    <property type="term" value="C:cytosol"/>
    <property type="evidence" value="ECO:0007005"/>
    <property type="project" value="MTBBASE"/>
</dbReference>
<dbReference type="GO" id="GO:0005576">
    <property type="term" value="C:extracellular region"/>
    <property type="evidence" value="ECO:0007005"/>
    <property type="project" value="MTBBASE"/>
</dbReference>
<dbReference type="GO" id="GO:0005886">
    <property type="term" value="C:plasma membrane"/>
    <property type="evidence" value="ECO:0000314"/>
    <property type="project" value="MTBBASE"/>
</dbReference>
<dbReference type="GO" id="GO:0106435">
    <property type="term" value="F:carboxylesterase activity"/>
    <property type="evidence" value="ECO:0000314"/>
    <property type="project" value="UniProtKB"/>
</dbReference>
<dbReference type="GO" id="GO:0043687">
    <property type="term" value="P:post-translational protein modification"/>
    <property type="evidence" value="ECO:0000315"/>
    <property type="project" value="MTBBASE"/>
</dbReference>
<dbReference type="Gene3D" id="3.40.50.1820">
    <property type="entry name" value="alpha/beta hydrolase"/>
    <property type="match status" value="1"/>
</dbReference>
<dbReference type="InterPro" id="IPR000073">
    <property type="entry name" value="AB_hydrolase_1"/>
</dbReference>
<dbReference type="InterPro" id="IPR029058">
    <property type="entry name" value="AB_hydrolase_fold"/>
</dbReference>
<dbReference type="InterPro" id="IPR051601">
    <property type="entry name" value="Serine_prot/Carboxylest_S33"/>
</dbReference>
<dbReference type="PANTHER" id="PTHR43248">
    <property type="entry name" value="2-SUCCINYL-6-HYDROXY-2,4-CYCLOHEXADIENE-1-CARBOXYLATE SYNTHASE"/>
    <property type="match status" value="1"/>
</dbReference>
<dbReference type="PANTHER" id="PTHR43248:SF29">
    <property type="entry name" value="TRIPEPTIDYL AMINOPEPTIDASE"/>
    <property type="match status" value="1"/>
</dbReference>
<dbReference type="Pfam" id="PF00561">
    <property type="entry name" value="Abhydrolase_1"/>
    <property type="match status" value="1"/>
</dbReference>
<dbReference type="SUPFAM" id="SSF53474">
    <property type="entry name" value="alpha/beta-Hydrolases"/>
    <property type="match status" value="1"/>
</dbReference>
<dbReference type="PROSITE" id="PS51257">
    <property type="entry name" value="PROKAR_LIPOPROTEIN"/>
    <property type="match status" value="1"/>
</dbReference>